<protein>
    <recommendedName>
        <fullName evidence="1">Large ribosomal subunit protein uL22</fullName>
    </recommendedName>
    <alternativeName>
        <fullName evidence="2">50S ribosomal protein L22</fullName>
    </alternativeName>
</protein>
<evidence type="ECO:0000255" key="1">
    <source>
        <dbReference type="HAMAP-Rule" id="MF_01331"/>
    </source>
</evidence>
<evidence type="ECO:0000305" key="2"/>
<comment type="function">
    <text evidence="1">This protein binds specifically to 23S rRNA; its binding is stimulated by other ribosomal proteins, e.g. L4, L17, and L20. It is important during the early stages of 50S assembly. It makes multiple contacts with different domains of the 23S rRNA in the assembled 50S subunit and ribosome (By similarity).</text>
</comment>
<comment type="function">
    <text evidence="1">The globular domain of the protein is located near the polypeptide exit tunnel on the outside of the subunit, while an extended beta-hairpin is found that lines the wall of the exit tunnel in the center of the 70S ribosome.</text>
</comment>
<comment type="subunit">
    <text evidence="1">Part of the 50S ribosomal subunit.</text>
</comment>
<comment type="similarity">
    <text evidence="1">Belongs to the universal ribosomal protein uL22 family.</text>
</comment>
<accession>Q0K624</accession>
<sequence length="109" mass="11916">MEVKAIHRGARISAQKTRLVADQIRGLPIERALNVLTFSPKKAAGIVKKVVESAIANAEHNEGADIDELKVKSIFVDKATSLKRFTARAKGRGNRIEKQTCHITVTLGN</sequence>
<proteinExistence type="inferred from homology"/>
<keyword id="KW-1185">Reference proteome</keyword>
<keyword id="KW-0687">Ribonucleoprotein</keyword>
<keyword id="KW-0689">Ribosomal protein</keyword>
<keyword id="KW-0694">RNA-binding</keyword>
<keyword id="KW-0699">rRNA-binding</keyword>
<organism>
    <name type="scientific">Cupriavidus necator (strain ATCC 17699 / DSM 428 / KCTC 22496 / NCIMB 10442 / H16 / Stanier 337)</name>
    <name type="common">Ralstonia eutropha</name>
    <dbReference type="NCBI Taxonomy" id="381666"/>
    <lineage>
        <taxon>Bacteria</taxon>
        <taxon>Pseudomonadati</taxon>
        <taxon>Pseudomonadota</taxon>
        <taxon>Betaproteobacteria</taxon>
        <taxon>Burkholderiales</taxon>
        <taxon>Burkholderiaceae</taxon>
        <taxon>Cupriavidus</taxon>
    </lineage>
</organism>
<reference key="1">
    <citation type="journal article" date="2006" name="Nat. Biotechnol.">
        <title>Genome sequence of the bioplastic-producing 'Knallgas' bacterium Ralstonia eutropha H16.</title>
        <authorList>
            <person name="Pohlmann A."/>
            <person name="Fricke W.F."/>
            <person name="Reinecke F."/>
            <person name="Kusian B."/>
            <person name="Liesegang H."/>
            <person name="Cramm R."/>
            <person name="Eitinger T."/>
            <person name="Ewering C."/>
            <person name="Poetter M."/>
            <person name="Schwartz E."/>
            <person name="Strittmatter A."/>
            <person name="Voss I."/>
            <person name="Gottschalk G."/>
            <person name="Steinbuechel A."/>
            <person name="Friedrich B."/>
            <person name="Bowien B."/>
        </authorList>
    </citation>
    <scope>NUCLEOTIDE SEQUENCE [LARGE SCALE GENOMIC DNA]</scope>
    <source>
        <strain>ATCC 17699 / DSM 428 / KCTC 22496 / NCIMB 10442 / H16 / Stanier 337</strain>
    </source>
</reference>
<dbReference type="EMBL" id="AM260479">
    <property type="protein sequence ID" value="CAJ94547.1"/>
    <property type="molecule type" value="Genomic_DNA"/>
</dbReference>
<dbReference type="RefSeq" id="WP_010812393.1">
    <property type="nucleotide sequence ID" value="NZ_CP039287.1"/>
</dbReference>
<dbReference type="SMR" id="Q0K624"/>
<dbReference type="STRING" id="381666.H16_A3479"/>
<dbReference type="GeneID" id="98344071"/>
<dbReference type="KEGG" id="reh:H16_A3479"/>
<dbReference type="eggNOG" id="COG0091">
    <property type="taxonomic scope" value="Bacteria"/>
</dbReference>
<dbReference type="HOGENOM" id="CLU_083987_3_3_4"/>
<dbReference type="OrthoDB" id="9805969at2"/>
<dbReference type="Proteomes" id="UP000008210">
    <property type="component" value="Chromosome 1"/>
</dbReference>
<dbReference type="GO" id="GO:0022625">
    <property type="term" value="C:cytosolic large ribosomal subunit"/>
    <property type="evidence" value="ECO:0007669"/>
    <property type="project" value="TreeGrafter"/>
</dbReference>
<dbReference type="GO" id="GO:0019843">
    <property type="term" value="F:rRNA binding"/>
    <property type="evidence" value="ECO:0007669"/>
    <property type="project" value="UniProtKB-UniRule"/>
</dbReference>
<dbReference type="GO" id="GO:0003735">
    <property type="term" value="F:structural constituent of ribosome"/>
    <property type="evidence" value="ECO:0007669"/>
    <property type="project" value="InterPro"/>
</dbReference>
<dbReference type="GO" id="GO:0006412">
    <property type="term" value="P:translation"/>
    <property type="evidence" value="ECO:0007669"/>
    <property type="project" value="UniProtKB-UniRule"/>
</dbReference>
<dbReference type="CDD" id="cd00336">
    <property type="entry name" value="Ribosomal_L22"/>
    <property type="match status" value="1"/>
</dbReference>
<dbReference type="FunFam" id="3.90.470.10:FF:000001">
    <property type="entry name" value="50S ribosomal protein L22"/>
    <property type="match status" value="1"/>
</dbReference>
<dbReference type="Gene3D" id="3.90.470.10">
    <property type="entry name" value="Ribosomal protein L22/L17"/>
    <property type="match status" value="1"/>
</dbReference>
<dbReference type="HAMAP" id="MF_01331_B">
    <property type="entry name" value="Ribosomal_uL22_B"/>
    <property type="match status" value="1"/>
</dbReference>
<dbReference type="InterPro" id="IPR001063">
    <property type="entry name" value="Ribosomal_uL22"/>
</dbReference>
<dbReference type="InterPro" id="IPR005727">
    <property type="entry name" value="Ribosomal_uL22_bac/chlpt-type"/>
</dbReference>
<dbReference type="InterPro" id="IPR047867">
    <property type="entry name" value="Ribosomal_uL22_bac/org-type"/>
</dbReference>
<dbReference type="InterPro" id="IPR018260">
    <property type="entry name" value="Ribosomal_uL22_CS"/>
</dbReference>
<dbReference type="InterPro" id="IPR036394">
    <property type="entry name" value="Ribosomal_uL22_sf"/>
</dbReference>
<dbReference type="NCBIfam" id="TIGR01044">
    <property type="entry name" value="rplV_bact"/>
    <property type="match status" value="1"/>
</dbReference>
<dbReference type="PANTHER" id="PTHR13501">
    <property type="entry name" value="CHLOROPLAST 50S RIBOSOMAL PROTEIN L22-RELATED"/>
    <property type="match status" value="1"/>
</dbReference>
<dbReference type="PANTHER" id="PTHR13501:SF8">
    <property type="entry name" value="LARGE RIBOSOMAL SUBUNIT PROTEIN UL22M"/>
    <property type="match status" value="1"/>
</dbReference>
<dbReference type="Pfam" id="PF00237">
    <property type="entry name" value="Ribosomal_L22"/>
    <property type="match status" value="1"/>
</dbReference>
<dbReference type="SUPFAM" id="SSF54843">
    <property type="entry name" value="Ribosomal protein L22"/>
    <property type="match status" value="1"/>
</dbReference>
<dbReference type="PROSITE" id="PS00464">
    <property type="entry name" value="RIBOSOMAL_L22"/>
    <property type="match status" value="1"/>
</dbReference>
<gene>
    <name evidence="1" type="primary">rplV</name>
    <name type="ordered locus">H16_A3479</name>
</gene>
<feature type="chain" id="PRO_1000052633" description="Large ribosomal subunit protein uL22">
    <location>
        <begin position="1"/>
        <end position="109"/>
    </location>
</feature>
<name>RL22_CUPNH</name>